<evidence type="ECO:0000250" key="1"/>
<evidence type="ECO:0000255" key="2"/>
<evidence type="ECO:0000255" key="3">
    <source>
        <dbReference type="PROSITE-ProRule" id="PRU00077"/>
    </source>
</evidence>
<evidence type="ECO:0000255" key="4">
    <source>
        <dbReference type="PROSITE-ProRule" id="PRU00448"/>
    </source>
</evidence>
<evidence type="ECO:0000256" key="5">
    <source>
        <dbReference type="SAM" id="MobiDB-lite"/>
    </source>
</evidence>
<evidence type="ECO:0000305" key="6"/>
<comment type="function">
    <text evidence="1">Component of the PAN1 actin cytoskeleton-regulatory complex required for the internalization of endosomes during actin-coupled endocytosis. The complex links the site of endocytosis to the cell membrane-associated actin cytoskeleton. Mediates uptake of external molecules and vacuolar degradation of plasma membrane proteins. Plays a role in the proper organization of the cell membrane-associated actin cytoskeleton and promotes its destabilization (By similarity).</text>
</comment>
<comment type="subunit">
    <text evidence="1">Component of the PAN1 actin cytoskeleton-regulatory complex.</text>
</comment>
<comment type="subcellular location">
    <subcellularLocation>
        <location evidence="1">Cell membrane</location>
        <topology evidence="1">Peripheral membrane protein</topology>
        <orientation evidence="1">Cytoplasmic side</orientation>
    </subcellularLocation>
    <subcellularLocation>
        <location evidence="1">Endosome membrane</location>
        <topology evidence="1">Peripheral membrane protein</topology>
        <orientation evidence="1">Cytoplasmic side</orientation>
    </subcellularLocation>
    <subcellularLocation>
        <location evidence="1">Cytoplasm</location>
        <location evidence="1">Cytoskeleton</location>
        <location evidence="1">Actin patch</location>
    </subcellularLocation>
    <text evidence="1">Cytoplasmic and cortical actin patches.</text>
</comment>
<comment type="similarity">
    <text evidence="6">Belongs to the END3 family.</text>
</comment>
<organism>
    <name type="scientific">Kluyveromyces lactis (strain ATCC 8585 / CBS 2359 / DSM 70799 / NBRC 1267 / NRRL Y-1140 / WM37)</name>
    <name type="common">Yeast</name>
    <name type="synonym">Candida sphaerica</name>
    <dbReference type="NCBI Taxonomy" id="284590"/>
    <lineage>
        <taxon>Eukaryota</taxon>
        <taxon>Fungi</taxon>
        <taxon>Dikarya</taxon>
        <taxon>Ascomycota</taxon>
        <taxon>Saccharomycotina</taxon>
        <taxon>Saccharomycetes</taxon>
        <taxon>Saccharomycetales</taxon>
        <taxon>Saccharomycetaceae</taxon>
        <taxon>Kluyveromyces</taxon>
    </lineage>
</organism>
<dbReference type="EMBL" id="CR382123">
    <property type="protein sequence ID" value="CAH01561.1"/>
    <property type="molecule type" value="Genomic_DNA"/>
</dbReference>
<dbReference type="RefSeq" id="XP_452710.1">
    <property type="nucleotide sequence ID" value="XM_452710.1"/>
</dbReference>
<dbReference type="FunCoup" id="Q6CTM9">
    <property type="interactions" value="149"/>
</dbReference>
<dbReference type="STRING" id="284590.Q6CTM9"/>
<dbReference type="PaxDb" id="284590-Q6CTM9"/>
<dbReference type="KEGG" id="kla:KLLA0_C11429g"/>
<dbReference type="eggNOG" id="KOG0998">
    <property type="taxonomic scope" value="Eukaryota"/>
</dbReference>
<dbReference type="HOGENOM" id="CLU_040829_0_0_1"/>
<dbReference type="InParanoid" id="Q6CTM9"/>
<dbReference type="OMA" id="DWLIPES"/>
<dbReference type="Proteomes" id="UP000000598">
    <property type="component" value="Chromosome C"/>
</dbReference>
<dbReference type="GO" id="GO:0030479">
    <property type="term" value="C:actin cortical patch"/>
    <property type="evidence" value="ECO:0007669"/>
    <property type="project" value="UniProtKB-SubCell"/>
</dbReference>
<dbReference type="GO" id="GO:0010008">
    <property type="term" value="C:endosome membrane"/>
    <property type="evidence" value="ECO:0007669"/>
    <property type="project" value="UniProtKB-SubCell"/>
</dbReference>
<dbReference type="GO" id="GO:0005886">
    <property type="term" value="C:plasma membrane"/>
    <property type="evidence" value="ECO:0007669"/>
    <property type="project" value="UniProtKB-SubCell"/>
</dbReference>
<dbReference type="GO" id="GO:0003779">
    <property type="term" value="F:actin binding"/>
    <property type="evidence" value="ECO:0007669"/>
    <property type="project" value="UniProtKB-KW"/>
</dbReference>
<dbReference type="GO" id="GO:0005509">
    <property type="term" value="F:calcium ion binding"/>
    <property type="evidence" value="ECO:0007669"/>
    <property type="project" value="InterPro"/>
</dbReference>
<dbReference type="GO" id="GO:0007015">
    <property type="term" value="P:actin filament organization"/>
    <property type="evidence" value="ECO:0007669"/>
    <property type="project" value="InterPro"/>
</dbReference>
<dbReference type="GO" id="GO:0006897">
    <property type="term" value="P:endocytosis"/>
    <property type="evidence" value="ECO:0007669"/>
    <property type="project" value="UniProtKB-KW"/>
</dbReference>
<dbReference type="GO" id="GO:0016197">
    <property type="term" value="P:endosomal transport"/>
    <property type="evidence" value="ECO:0007669"/>
    <property type="project" value="TreeGrafter"/>
</dbReference>
<dbReference type="CDD" id="cd00052">
    <property type="entry name" value="EH"/>
    <property type="match status" value="1"/>
</dbReference>
<dbReference type="FunFam" id="1.10.238.10:FF:000323">
    <property type="entry name" value="Actin cytoskeleton-regulatory complex protein end3"/>
    <property type="match status" value="1"/>
</dbReference>
<dbReference type="Gene3D" id="1.10.238.10">
    <property type="entry name" value="EF-hand"/>
    <property type="match status" value="2"/>
</dbReference>
<dbReference type="InterPro" id="IPR011992">
    <property type="entry name" value="EF-hand-dom_pair"/>
</dbReference>
<dbReference type="InterPro" id="IPR018247">
    <property type="entry name" value="EF_Hand_1_Ca_BS"/>
</dbReference>
<dbReference type="InterPro" id="IPR002048">
    <property type="entry name" value="EF_hand_dom"/>
</dbReference>
<dbReference type="InterPro" id="IPR000261">
    <property type="entry name" value="EH_dom"/>
</dbReference>
<dbReference type="InterPro" id="IPR025604">
    <property type="entry name" value="End3"/>
</dbReference>
<dbReference type="PANTHER" id="PTHR11216">
    <property type="entry name" value="EH DOMAIN"/>
    <property type="match status" value="1"/>
</dbReference>
<dbReference type="Pfam" id="PF12763">
    <property type="entry name" value="EH"/>
    <property type="match status" value="1"/>
</dbReference>
<dbReference type="Pfam" id="PF12761">
    <property type="entry name" value="End3"/>
    <property type="match status" value="1"/>
</dbReference>
<dbReference type="SMART" id="SM00027">
    <property type="entry name" value="EH"/>
    <property type="match status" value="2"/>
</dbReference>
<dbReference type="SUPFAM" id="SSF47473">
    <property type="entry name" value="EF-hand"/>
    <property type="match status" value="2"/>
</dbReference>
<dbReference type="PROSITE" id="PS00018">
    <property type="entry name" value="EF_HAND_1"/>
    <property type="match status" value="1"/>
</dbReference>
<dbReference type="PROSITE" id="PS50222">
    <property type="entry name" value="EF_HAND_2"/>
    <property type="match status" value="1"/>
</dbReference>
<dbReference type="PROSITE" id="PS50031">
    <property type="entry name" value="EH"/>
    <property type="match status" value="2"/>
</dbReference>
<accession>Q6CTM9</accession>
<reference key="1">
    <citation type="journal article" date="2004" name="Nature">
        <title>Genome evolution in yeasts.</title>
        <authorList>
            <person name="Dujon B."/>
            <person name="Sherman D."/>
            <person name="Fischer G."/>
            <person name="Durrens P."/>
            <person name="Casaregola S."/>
            <person name="Lafontaine I."/>
            <person name="de Montigny J."/>
            <person name="Marck C."/>
            <person name="Neuveglise C."/>
            <person name="Talla E."/>
            <person name="Goffard N."/>
            <person name="Frangeul L."/>
            <person name="Aigle M."/>
            <person name="Anthouard V."/>
            <person name="Babour A."/>
            <person name="Barbe V."/>
            <person name="Barnay S."/>
            <person name="Blanchin S."/>
            <person name="Beckerich J.-M."/>
            <person name="Beyne E."/>
            <person name="Bleykasten C."/>
            <person name="Boisrame A."/>
            <person name="Boyer J."/>
            <person name="Cattolico L."/>
            <person name="Confanioleri F."/>
            <person name="de Daruvar A."/>
            <person name="Despons L."/>
            <person name="Fabre E."/>
            <person name="Fairhead C."/>
            <person name="Ferry-Dumazet H."/>
            <person name="Groppi A."/>
            <person name="Hantraye F."/>
            <person name="Hennequin C."/>
            <person name="Jauniaux N."/>
            <person name="Joyet P."/>
            <person name="Kachouri R."/>
            <person name="Kerrest A."/>
            <person name="Koszul R."/>
            <person name="Lemaire M."/>
            <person name="Lesur I."/>
            <person name="Ma L."/>
            <person name="Muller H."/>
            <person name="Nicaud J.-M."/>
            <person name="Nikolski M."/>
            <person name="Oztas S."/>
            <person name="Ozier-Kalogeropoulos O."/>
            <person name="Pellenz S."/>
            <person name="Potier S."/>
            <person name="Richard G.-F."/>
            <person name="Straub M.-L."/>
            <person name="Suleau A."/>
            <person name="Swennen D."/>
            <person name="Tekaia F."/>
            <person name="Wesolowski-Louvel M."/>
            <person name="Westhof E."/>
            <person name="Wirth B."/>
            <person name="Zeniou-Meyer M."/>
            <person name="Zivanovic Y."/>
            <person name="Bolotin-Fukuhara M."/>
            <person name="Thierry A."/>
            <person name="Bouchier C."/>
            <person name="Caudron B."/>
            <person name="Scarpelli C."/>
            <person name="Gaillardin C."/>
            <person name="Weissenbach J."/>
            <person name="Wincker P."/>
            <person name="Souciet J.-L."/>
        </authorList>
    </citation>
    <scope>NUCLEOTIDE SEQUENCE [LARGE SCALE GENOMIC DNA]</scope>
    <source>
        <strain>ATCC 8585 / CBS 2359 / DSM 70799 / NBRC 1267 / NRRL Y-1140 / WM37</strain>
    </source>
</reference>
<sequence>MPKLEQFEIKKYWQIFSGLKPVENKLTHDQVLPILFNSKLDTSILNKIWFLADIDDDDQLDFEEFVICMRMIFDMVNKNIDSVPDELPDWLIPGSKAELVKQRKTERSSGTAETSSVVNVPTSSPAVDDYQKEVDWYISRDDKSQYESIYESAITSRDNSVSYVSLSSAVRSKYINLSSQDLEKTWRLVNPKLDTSIDKDPALYFIHILRQVNDYACPIPSHLPSALKETFTKTRVSTDLSSKQSEVRRPTLSTSNSSSYQIPKRGGTDFSVTQGTDWEVVRLQRELANIDSELSSAQQQSTSHNDSNDRMKLVKQQLEQFLEYQKNLVNNSNTSSESVDVGGLRDDIESIEQQVQMLEEYLKTKKSELHNLKIEVQSLY</sequence>
<name>END3_KLULA</name>
<protein>
    <recommendedName>
        <fullName>Actin cytoskeleton-regulatory complex protein END3</fullName>
    </recommendedName>
    <alternativeName>
        <fullName>Endocytosis protein 3</fullName>
    </alternativeName>
</protein>
<feature type="chain" id="PRO_0000349449" description="Actin cytoskeleton-regulatory complex protein END3">
    <location>
        <begin position="1"/>
        <end position="380"/>
    </location>
</feature>
<feature type="domain" description="EH 1" evidence="3">
    <location>
        <begin position="8"/>
        <end position="98"/>
    </location>
</feature>
<feature type="domain" description="EF-hand" evidence="4">
    <location>
        <begin position="40"/>
        <end position="75"/>
    </location>
</feature>
<feature type="domain" description="EH 2" evidence="3">
    <location>
        <begin position="142"/>
        <end position="234"/>
    </location>
</feature>
<feature type="region of interest" description="Disordered" evidence="5">
    <location>
        <begin position="102"/>
        <end position="122"/>
    </location>
</feature>
<feature type="region of interest" description="Disordered" evidence="5">
    <location>
        <begin position="238"/>
        <end position="271"/>
    </location>
</feature>
<feature type="coiled-coil region" evidence="2">
    <location>
        <begin position="278"/>
        <end position="379"/>
    </location>
</feature>
<feature type="compositionally biased region" description="Polar residues" evidence="5">
    <location>
        <begin position="251"/>
        <end position="261"/>
    </location>
</feature>
<feature type="binding site" evidence="4">
    <location>
        <position position="53"/>
    </location>
    <ligand>
        <name>Ca(2+)</name>
        <dbReference type="ChEBI" id="CHEBI:29108"/>
    </ligand>
</feature>
<feature type="binding site" evidence="4">
    <location>
        <position position="55"/>
    </location>
    <ligand>
        <name>Ca(2+)</name>
        <dbReference type="ChEBI" id="CHEBI:29108"/>
    </ligand>
</feature>
<feature type="binding site" evidence="4">
    <location>
        <position position="57"/>
    </location>
    <ligand>
        <name>Ca(2+)</name>
        <dbReference type="ChEBI" id="CHEBI:29108"/>
    </ligand>
</feature>
<feature type="binding site" evidence="4">
    <location>
        <position position="59"/>
    </location>
    <ligand>
        <name>Ca(2+)</name>
        <dbReference type="ChEBI" id="CHEBI:29108"/>
    </ligand>
</feature>
<feature type="binding site" evidence="4">
    <location>
        <position position="64"/>
    </location>
    <ligand>
        <name>Ca(2+)</name>
        <dbReference type="ChEBI" id="CHEBI:29108"/>
    </ligand>
</feature>
<proteinExistence type="inferred from homology"/>
<gene>
    <name type="primary">END3</name>
    <name type="ordered locus">KLLA0C11429g</name>
</gene>
<keyword id="KW-0009">Actin-binding</keyword>
<keyword id="KW-0106">Calcium</keyword>
<keyword id="KW-1003">Cell membrane</keyword>
<keyword id="KW-0175">Coiled coil</keyword>
<keyword id="KW-0963">Cytoplasm</keyword>
<keyword id="KW-0206">Cytoskeleton</keyword>
<keyword id="KW-0254">Endocytosis</keyword>
<keyword id="KW-0967">Endosome</keyword>
<keyword id="KW-0472">Membrane</keyword>
<keyword id="KW-0479">Metal-binding</keyword>
<keyword id="KW-1185">Reference proteome</keyword>
<keyword id="KW-0677">Repeat</keyword>